<proteinExistence type="evidence at transcript level"/>
<name>ARMX6_RAT</name>
<keyword id="KW-0472">Membrane</keyword>
<keyword id="KW-0496">Mitochondrion</keyword>
<keyword id="KW-1000">Mitochondrion outer membrane</keyword>
<keyword id="KW-1185">Reference proteome</keyword>
<keyword id="KW-0735">Signal-anchor</keyword>
<keyword id="KW-0812">Transmembrane</keyword>
<keyword id="KW-1133">Transmembrane helix</keyword>
<sequence>MGRAREMGWMAAGLMIGAGACYCMYKLTMGRDEGNELENEEEDEWDDEQDLDEEEADIWFDFTAMARPWSEDGEWDEPGAPGGTEDRRSGGGKANRAHPTKQRPFPYEHKNIWGVQSFQTFPCALNLTKCAFSQGKKMFTESTIAGFSLTHNVSRHLSSLSVVGSRSPTPQPTVREKALDVPEHPNSSIENQDQIKMYIDEVCRDAVFCCCKSFLQQAGLGLLISMTVINNMLAKSLSDPKFPLLSEGSGCAKVQGLEAQMSLPEKPVLAEEVLAAQMLFSFMCLFTRSGSREMLVEAISP</sequence>
<gene>
    <name type="primary">Armcx6</name>
</gene>
<evidence type="ECO:0000250" key="1">
    <source>
        <dbReference type="UniProtKB" id="Q8BHS6"/>
    </source>
</evidence>
<evidence type="ECO:0000250" key="2">
    <source>
        <dbReference type="UniProtKB" id="Q8K3A6"/>
    </source>
</evidence>
<evidence type="ECO:0000255" key="3"/>
<evidence type="ECO:0000256" key="4">
    <source>
        <dbReference type="SAM" id="MobiDB-lite"/>
    </source>
</evidence>
<evidence type="ECO:0000305" key="5"/>
<organism>
    <name type="scientific">Rattus norvegicus</name>
    <name type="common">Rat</name>
    <dbReference type="NCBI Taxonomy" id="10116"/>
    <lineage>
        <taxon>Eukaryota</taxon>
        <taxon>Metazoa</taxon>
        <taxon>Chordata</taxon>
        <taxon>Craniata</taxon>
        <taxon>Vertebrata</taxon>
        <taxon>Euteleostomi</taxon>
        <taxon>Mammalia</taxon>
        <taxon>Eutheria</taxon>
        <taxon>Euarchontoglires</taxon>
        <taxon>Glires</taxon>
        <taxon>Rodentia</taxon>
        <taxon>Myomorpha</taxon>
        <taxon>Muroidea</taxon>
        <taxon>Muridae</taxon>
        <taxon>Murinae</taxon>
        <taxon>Rattus</taxon>
    </lineage>
</organism>
<dbReference type="EMBL" id="BC081893">
    <property type="protein sequence ID" value="AAH81893.1"/>
    <property type="molecule type" value="mRNA"/>
</dbReference>
<dbReference type="RefSeq" id="NP_001007758.1">
    <property type="nucleotide sequence ID" value="NM_001007757.2"/>
</dbReference>
<dbReference type="RefSeq" id="NP_001406621.1">
    <property type="nucleotide sequence ID" value="NM_001419692.1"/>
</dbReference>
<dbReference type="RefSeq" id="XP_008771647.1">
    <property type="nucleotide sequence ID" value="XM_008773425.2"/>
</dbReference>
<dbReference type="RefSeq" id="XP_017457600.1">
    <property type="nucleotide sequence ID" value="XM_017602111.1"/>
</dbReference>
<dbReference type="RefSeq" id="XP_017457601.1">
    <property type="nucleotide sequence ID" value="XM_017602112.1"/>
</dbReference>
<dbReference type="RefSeq" id="XP_017457602.1">
    <property type="nucleotide sequence ID" value="XM_017602113.1"/>
</dbReference>
<dbReference type="RefSeq" id="XP_063136221.1">
    <property type="nucleotide sequence ID" value="XM_063280151.1"/>
</dbReference>
<dbReference type="RefSeq" id="XP_063136222.1">
    <property type="nucleotide sequence ID" value="XM_063280152.1"/>
</dbReference>
<dbReference type="FunCoup" id="Q66HF0">
    <property type="interactions" value="437"/>
</dbReference>
<dbReference type="STRING" id="10116.ENSRNOP00000035673"/>
<dbReference type="PhosphoSitePlus" id="Q66HF0"/>
<dbReference type="PaxDb" id="10116-ENSRNOP00000035673"/>
<dbReference type="Ensembl" id="ENSRNOT00000029807.6">
    <property type="protein sequence ID" value="ENSRNOP00000035673.4"/>
    <property type="gene ID" value="ENSRNOG00000037707.4"/>
</dbReference>
<dbReference type="GeneID" id="363496"/>
<dbReference type="KEGG" id="rno:363496"/>
<dbReference type="UCSC" id="RGD:1359303">
    <property type="organism name" value="rat"/>
</dbReference>
<dbReference type="AGR" id="RGD:1359303"/>
<dbReference type="CTD" id="54470"/>
<dbReference type="RGD" id="1359303">
    <property type="gene designation" value="Armcx6"/>
</dbReference>
<dbReference type="eggNOG" id="ENOG502RP3G">
    <property type="taxonomic scope" value="Eukaryota"/>
</dbReference>
<dbReference type="GeneTree" id="ENSGT00940000163042"/>
<dbReference type="HOGENOM" id="CLU_037187_0_1_1"/>
<dbReference type="InParanoid" id="Q66HF0"/>
<dbReference type="OMA" id="FIQGKMW"/>
<dbReference type="OrthoDB" id="10017790at2759"/>
<dbReference type="PhylomeDB" id="Q66HF0"/>
<dbReference type="TreeFam" id="TF335652"/>
<dbReference type="PRO" id="PR:Q66HF0"/>
<dbReference type="Proteomes" id="UP000002494">
    <property type="component" value="Chromosome X"/>
</dbReference>
<dbReference type="Bgee" id="ENSRNOG00000037707">
    <property type="expression patterns" value="Expressed in pancreas and 19 other cell types or tissues"/>
</dbReference>
<dbReference type="GO" id="GO:0005741">
    <property type="term" value="C:mitochondrial outer membrane"/>
    <property type="evidence" value="ECO:0007669"/>
    <property type="project" value="UniProtKB-SubCell"/>
</dbReference>
<dbReference type="GO" id="GO:0005739">
    <property type="term" value="C:mitochondrion"/>
    <property type="evidence" value="ECO:0000318"/>
    <property type="project" value="GO_Central"/>
</dbReference>
<dbReference type="InterPro" id="IPR006911">
    <property type="entry name" value="ARM-rpt_dom"/>
</dbReference>
<dbReference type="InterPro" id="IPR051303">
    <property type="entry name" value="Armcx_regulator"/>
</dbReference>
<dbReference type="PANTHER" id="PTHR15712">
    <property type="entry name" value="ARMADILLO REPEAT CONTAINING PROTEIN"/>
    <property type="match status" value="1"/>
</dbReference>
<dbReference type="PANTHER" id="PTHR15712:SF6">
    <property type="entry name" value="PROTEIN ARMCX6"/>
    <property type="match status" value="1"/>
</dbReference>
<dbReference type="Pfam" id="PF04826">
    <property type="entry name" value="Arm_2"/>
    <property type="match status" value="1"/>
</dbReference>
<comment type="function">
    <text evidence="2">May regulate the dynamics and distribution of mitochondria in neural cells.</text>
</comment>
<comment type="subcellular location">
    <subcellularLocation>
        <location evidence="2">Mitochondrion</location>
    </subcellularLocation>
    <subcellularLocation>
        <location evidence="1">Mitochondrion outer membrane</location>
        <topology evidence="3">Single-pass membrane protein</topology>
    </subcellularLocation>
</comment>
<comment type="similarity">
    <text evidence="5">Belongs to the eutherian X-chromosome-specific Armcx family.</text>
</comment>
<feature type="chain" id="PRO_0000191376" description="Protein ARMCX6">
    <location>
        <begin position="1"/>
        <end position="301"/>
    </location>
</feature>
<feature type="topological domain" description="Mitochondrial intermembrane" evidence="1">
    <location>
        <begin position="1"/>
        <end position="7"/>
    </location>
</feature>
<feature type="transmembrane region" description="Helical; Signal-anchor" evidence="3">
    <location>
        <begin position="8"/>
        <end position="25"/>
    </location>
</feature>
<feature type="topological domain" description="Cytoplasmic" evidence="1">
    <location>
        <begin position="26"/>
        <end position="301"/>
    </location>
</feature>
<feature type="region of interest" description="Mitochondrion outer membrane (MOM)-targeting sequence" evidence="5">
    <location>
        <begin position="1"/>
        <end position="6"/>
    </location>
</feature>
<feature type="region of interest" description="Mitochondrion outer membrane (MOM)-targeting sequence" evidence="5">
    <location>
        <begin position="26"/>
        <end position="36"/>
    </location>
</feature>
<feature type="region of interest" description="Disordered" evidence="4">
    <location>
        <begin position="70"/>
        <end position="105"/>
    </location>
</feature>
<reference key="1">
    <citation type="journal article" date="2004" name="Genome Res.">
        <title>The status, quality, and expansion of the NIH full-length cDNA project: the Mammalian Gene Collection (MGC).</title>
        <authorList>
            <consortium name="The MGC Project Team"/>
        </authorList>
    </citation>
    <scope>NUCLEOTIDE SEQUENCE [LARGE SCALE MRNA]</scope>
    <source>
        <tissue>Kidney</tissue>
    </source>
</reference>
<protein>
    <recommendedName>
        <fullName>Protein ARMCX6</fullName>
    </recommendedName>
</protein>
<accession>Q66HF0</accession>